<name>HSLO_STRZP</name>
<sequence length="290" mass="31663">MDKIIKTISESGAFRAFVLDSTETVRTAQEKHQTQASSTVALGRTLIASQILAANEKGNTKLTVKVLGSSSLGAIITVADTKGNVKGYVQNPGVDIKKTATGEVLVGPFVGNGQFLVITDYGTGNPYNSITPLISGEIGEDLAFYLTESQQTPSAVGLNVLLDEEDKVKVAGGFLVQVLPGAKKEEIARFEKRIQEMPAISTLLESDDHIEALLKAIYGDEAYKRLSEEEIRFQCDCSHERFMNALASLPSSDLQEMKEEDHGAEITCQFCQTTYNFDEKDLEELIRDKS</sequence>
<accession>C1CNG1</accession>
<keyword id="KW-0143">Chaperone</keyword>
<keyword id="KW-0963">Cytoplasm</keyword>
<keyword id="KW-1015">Disulfide bond</keyword>
<keyword id="KW-0676">Redox-active center</keyword>
<keyword id="KW-0862">Zinc</keyword>
<gene>
    <name evidence="1" type="primary">hslO</name>
    <name type="ordered locus">SPP_2240</name>
</gene>
<proteinExistence type="inferred from homology"/>
<comment type="function">
    <text evidence="1">Redox regulated molecular chaperone. Protects both thermally unfolding and oxidatively damaged proteins from irreversible aggregation. Plays an important role in the bacterial defense system toward oxidative stress.</text>
</comment>
<comment type="subcellular location">
    <subcellularLocation>
        <location evidence="1">Cytoplasm</location>
    </subcellularLocation>
</comment>
<comment type="PTM">
    <text evidence="1">Under oxidizing conditions two disulfide bonds are formed involving the reactive cysteines. Under reducing conditions zinc is bound to the reactive cysteines and the protein is inactive.</text>
</comment>
<comment type="similarity">
    <text evidence="1">Belongs to the HSP33 family.</text>
</comment>
<dbReference type="EMBL" id="CP000920">
    <property type="protein sequence ID" value="ACO21007.1"/>
    <property type="molecule type" value="Genomic_DNA"/>
</dbReference>
<dbReference type="RefSeq" id="WP_000357847.1">
    <property type="nucleotide sequence ID" value="NC_012467.1"/>
</dbReference>
<dbReference type="SMR" id="C1CNG1"/>
<dbReference type="KEGG" id="spp:SPP_2240"/>
<dbReference type="HOGENOM" id="CLU_054493_1_0_9"/>
<dbReference type="GO" id="GO:0005737">
    <property type="term" value="C:cytoplasm"/>
    <property type="evidence" value="ECO:0007669"/>
    <property type="project" value="UniProtKB-SubCell"/>
</dbReference>
<dbReference type="GO" id="GO:0044183">
    <property type="term" value="F:protein folding chaperone"/>
    <property type="evidence" value="ECO:0007669"/>
    <property type="project" value="TreeGrafter"/>
</dbReference>
<dbReference type="GO" id="GO:0051082">
    <property type="term" value="F:unfolded protein binding"/>
    <property type="evidence" value="ECO:0007669"/>
    <property type="project" value="UniProtKB-UniRule"/>
</dbReference>
<dbReference type="GO" id="GO:0042026">
    <property type="term" value="P:protein refolding"/>
    <property type="evidence" value="ECO:0007669"/>
    <property type="project" value="TreeGrafter"/>
</dbReference>
<dbReference type="CDD" id="cd00498">
    <property type="entry name" value="Hsp33"/>
    <property type="match status" value="1"/>
</dbReference>
<dbReference type="Gene3D" id="3.55.30.10">
    <property type="entry name" value="Hsp33 domain"/>
    <property type="match status" value="1"/>
</dbReference>
<dbReference type="Gene3D" id="3.90.1280.10">
    <property type="entry name" value="HSP33 redox switch-like"/>
    <property type="match status" value="1"/>
</dbReference>
<dbReference type="HAMAP" id="MF_00117">
    <property type="entry name" value="HslO"/>
    <property type="match status" value="1"/>
</dbReference>
<dbReference type="InterPro" id="IPR000397">
    <property type="entry name" value="Heat_shock_Hsp33"/>
</dbReference>
<dbReference type="InterPro" id="IPR016154">
    <property type="entry name" value="Heat_shock_Hsp33_C"/>
</dbReference>
<dbReference type="InterPro" id="IPR016153">
    <property type="entry name" value="Heat_shock_Hsp33_N"/>
</dbReference>
<dbReference type="NCBIfam" id="NF001033">
    <property type="entry name" value="PRK00114.1"/>
    <property type="match status" value="1"/>
</dbReference>
<dbReference type="PANTHER" id="PTHR30111">
    <property type="entry name" value="33 KDA CHAPERONIN"/>
    <property type="match status" value="1"/>
</dbReference>
<dbReference type="PANTHER" id="PTHR30111:SF1">
    <property type="entry name" value="33 KDA CHAPERONIN"/>
    <property type="match status" value="1"/>
</dbReference>
<dbReference type="Pfam" id="PF01430">
    <property type="entry name" value="HSP33"/>
    <property type="match status" value="1"/>
</dbReference>
<dbReference type="PIRSF" id="PIRSF005261">
    <property type="entry name" value="Heat_shock_Hsp33"/>
    <property type="match status" value="1"/>
</dbReference>
<dbReference type="SUPFAM" id="SSF64397">
    <property type="entry name" value="Hsp33 domain"/>
    <property type="match status" value="1"/>
</dbReference>
<dbReference type="SUPFAM" id="SSF118352">
    <property type="entry name" value="HSP33 redox switch-like"/>
    <property type="match status" value="1"/>
</dbReference>
<reference key="1">
    <citation type="journal article" date="2010" name="Genome Biol.">
        <title>Structure and dynamics of the pan-genome of Streptococcus pneumoniae and closely related species.</title>
        <authorList>
            <person name="Donati C."/>
            <person name="Hiller N.L."/>
            <person name="Tettelin H."/>
            <person name="Muzzi A."/>
            <person name="Croucher N.J."/>
            <person name="Angiuoli S.V."/>
            <person name="Oggioni M."/>
            <person name="Dunning Hotopp J.C."/>
            <person name="Hu F.Z."/>
            <person name="Riley D.R."/>
            <person name="Covacci A."/>
            <person name="Mitchell T.J."/>
            <person name="Bentley S.D."/>
            <person name="Kilian M."/>
            <person name="Ehrlich G.D."/>
            <person name="Rappuoli R."/>
            <person name="Moxon E.R."/>
            <person name="Masignani V."/>
        </authorList>
    </citation>
    <scope>NUCLEOTIDE SEQUENCE [LARGE SCALE GENOMIC DNA]</scope>
    <source>
        <strain>P1031</strain>
    </source>
</reference>
<organism>
    <name type="scientific">Streptococcus pneumoniae (strain P1031)</name>
    <dbReference type="NCBI Taxonomy" id="488223"/>
    <lineage>
        <taxon>Bacteria</taxon>
        <taxon>Bacillati</taxon>
        <taxon>Bacillota</taxon>
        <taxon>Bacilli</taxon>
        <taxon>Lactobacillales</taxon>
        <taxon>Streptococcaceae</taxon>
        <taxon>Streptococcus</taxon>
    </lineage>
</organism>
<feature type="chain" id="PRO_1000119269" description="33 kDa chaperonin">
    <location>
        <begin position="1"/>
        <end position="290"/>
    </location>
</feature>
<feature type="disulfide bond" description="Redox-active" evidence="1">
    <location>
        <begin position="235"/>
        <end position="237"/>
    </location>
</feature>
<feature type="disulfide bond" description="Redox-active" evidence="1">
    <location>
        <begin position="268"/>
        <end position="271"/>
    </location>
</feature>
<protein>
    <recommendedName>
        <fullName evidence="1">33 kDa chaperonin</fullName>
    </recommendedName>
    <alternativeName>
        <fullName evidence="1">Heat shock protein 33 homolog</fullName>
        <shortName evidence="1">HSP33</shortName>
    </alternativeName>
</protein>
<evidence type="ECO:0000255" key="1">
    <source>
        <dbReference type="HAMAP-Rule" id="MF_00117"/>
    </source>
</evidence>